<comment type="similarity">
    <text evidence="2">Belongs to the chlamydial CPn_0121/CT_031/TC_0300 family.</text>
</comment>
<sequence>MARKDRLTNERLNKLFDSPFSLVNYVIKQAKNKIARGDVRSSNVAIEALNFLDLYGIQSEYAERDDRERHLSATGERRREQGFGTSRRKDPSLYNWSDVK</sequence>
<gene>
    <name type="ordered locus">CT_031</name>
</gene>
<protein>
    <recommendedName>
        <fullName>Uncharacterized protein CT_031</fullName>
    </recommendedName>
</protein>
<feature type="chain" id="PRO_0000218359" description="Uncharacterized protein CT_031">
    <location>
        <begin position="1"/>
        <end position="100"/>
    </location>
</feature>
<feature type="region of interest" description="Disordered" evidence="1">
    <location>
        <begin position="65"/>
        <end position="100"/>
    </location>
</feature>
<feature type="compositionally biased region" description="Basic and acidic residues" evidence="1">
    <location>
        <begin position="65"/>
        <end position="91"/>
    </location>
</feature>
<dbReference type="EMBL" id="AE001273">
    <property type="protein sequence ID" value="AAC67621.1"/>
    <property type="molecule type" value="Genomic_DNA"/>
</dbReference>
<dbReference type="PIR" id="B71567">
    <property type="entry name" value="B71567"/>
</dbReference>
<dbReference type="RefSeq" id="NP_219533.1">
    <property type="nucleotide sequence ID" value="NC_000117.1"/>
</dbReference>
<dbReference type="RefSeq" id="WP_009871378.1">
    <property type="nucleotide sequence ID" value="NC_000117.1"/>
</dbReference>
<dbReference type="SMR" id="O84034"/>
<dbReference type="STRING" id="272561.CT_031"/>
<dbReference type="EnsemblBacteria" id="AAC67621">
    <property type="protein sequence ID" value="AAC67621"/>
    <property type="gene ID" value="CT_031"/>
</dbReference>
<dbReference type="GeneID" id="884149"/>
<dbReference type="KEGG" id="ctr:CT_031"/>
<dbReference type="PATRIC" id="fig|272561.5.peg.36"/>
<dbReference type="HOGENOM" id="CLU_180607_0_0_0"/>
<dbReference type="InParanoid" id="O84034"/>
<dbReference type="OrthoDB" id="18977at2"/>
<dbReference type="Proteomes" id="UP000000431">
    <property type="component" value="Chromosome"/>
</dbReference>
<reference key="1">
    <citation type="journal article" date="1998" name="Science">
        <title>Genome sequence of an obligate intracellular pathogen of humans: Chlamydia trachomatis.</title>
        <authorList>
            <person name="Stephens R.S."/>
            <person name="Kalman S."/>
            <person name="Lammel C.J."/>
            <person name="Fan J."/>
            <person name="Marathe R."/>
            <person name="Aravind L."/>
            <person name="Mitchell W.P."/>
            <person name="Olinger L."/>
            <person name="Tatusov R.L."/>
            <person name="Zhao Q."/>
            <person name="Koonin E.V."/>
            <person name="Davis R.W."/>
        </authorList>
    </citation>
    <scope>NUCLEOTIDE SEQUENCE [LARGE SCALE GENOMIC DNA]</scope>
    <source>
        <strain>ATCC VR-885 / DSM 19411 / UW-3/Cx</strain>
    </source>
</reference>
<organism>
    <name type="scientific">Chlamydia trachomatis serovar D (strain ATCC VR-885 / DSM 19411 / UW-3/Cx)</name>
    <dbReference type="NCBI Taxonomy" id="272561"/>
    <lineage>
        <taxon>Bacteria</taxon>
        <taxon>Pseudomonadati</taxon>
        <taxon>Chlamydiota</taxon>
        <taxon>Chlamydiia</taxon>
        <taxon>Chlamydiales</taxon>
        <taxon>Chlamydiaceae</taxon>
        <taxon>Chlamydia/Chlamydophila group</taxon>
        <taxon>Chlamydia</taxon>
    </lineage>
</organism>
<accession>O84034</accession>
<evidence type="ECO:0000256" key="1">
    <source>
        <dbReference type="SAM" id="MobiDB-lite"/>
    </source>
</evidence>
<evidence type="ECO:0000305" key="2"/>
<name>Y031_CHLTR</name>
<keyword id="KW-1185">Reference proteome</keyword>
<proteinExistence type="inferred from homology"/>